<proteinExistence type="inferred from homology"/>
<feature type="chain" id="PRO_0000447037" description="L-histidine 2-aminobutanoyltransferase">
    <location>
        <begin position="1"/>
        <end position="265"/>
    </location>
</feature>
<keyword id="KW-0949">S-adenosyl-L-methionine</keyword>
<keyword id="KW-0808">Transferase</keyword>
<organism>
    <name type="scientific">Yersinia pestis</name>
    <dbReference type="NCBI Taxonomy" id="632"/>
    <lineage>
        <taxon>Bacteria</taxon>
        <taxon>Pseudomonadati</taxon>
        <taxon>Pseudomonadota</taxon>
        <taxon>Gammaproteobacteria</taxon>
        <taxon>Enterobacterales</taxon>
        <taxon>Yersiniaceae</taxon>
        <taxon>Yersinia</taxon>
    </lineage>
</organism>
<dbReference type="EC" id="2.5.1.-" evidence="2"/>
<dbReference type="EMBL" id="AE009952">
    <property type="protein sequence ID" value="AAM86387.1"/>
    <property type="molecule type" value="Genomic_DNA"/>
</dbReference>
<dbReference type="EMBL" id="AE017042">
    <property type="protein sequence ID" value="AAS61493.1"/>
    <property type="molecule type" value="Genomic_DNA"/>
</dbReference>
<dbReference type="EMBL" id="UHIZ01000002">
    <property type="protein sequence ID" value="SUQ38696.1"/>
    <property type="molecule type" value="Genomic_DNA"/>
</dbReference>
<dbReference type="RefSeq" id="WP_002211374.1">
    <property type="nucleotide sequence ID" value="NZ_WUCM01000027.1"/>
</dbReference>
<dbReference type="SMR" id="Q8D035"/>
<dbReference type="IntAct" id="Q8D035">
    <property type="interactions" value="1"/>
</dbReference>
<dbReference type="STRING" id="214092.YPO1346"/>
<dbReference type="PaxDb" id="214092-YPO1346"/>
<dbReference type="DNASU" id="1147783"/>
<dbReference type="EnsemblBacteria" id="AAS61493">
    <property type="protein sequence ID" value="AAS61493"/>
    <property type="gene ID" value="YP_1250"/>
</dbReference>
<dbReference type="KEGG" id="ypk:y2836"/>
<dbReference type="KEGG" id="ypm:YP_1250"/>
<dbReference type="PATRIC" id="fig|632.151.peg.219"/>
<dbReference type="HOGENOM" id="CLU_089313_0_0_6"/>
<dbReference type="OMA" id="EARMQFS"/>
<dbReference type="Proteomes" id="UP000001019">
    <property type="component" value="Chromosome"/>
</dbReference>
<dbReference type="Proteomes" id="UP000002490">
    <property type="component" value="Chromosome"/>
</dbReference>
<dbReference type="GO" id="GO:0030410">
    <property type="term" value="F:nicotianamine synthase activity"/>
    <property type="evidence" value="ECO:0007669"/>
    <property type="project" value="InterPro"/>
</dbReference>
<dbReference type="GO" id="GO:0030418">
    <property type="term" value="P:nicotianamine biosynthetic process"/>
    <property type="evidence" value="ECO:0007669"/>
    <property type="project" value="InterPro"/>
</dbReference>
<dbReference type="Gene3D" id="3.40.50.150">
    <property type="entry name" value="Vaccinia Virus protein VP39"/>
    <property type="match status" value="1"/>
</dbReference>
<dbReference type="InterPro" id="IPR036291">
    <property type="entry name" value="NAD(P)-bd_dom_sf"/>
</dbReference>
<dbReference type="InterPro" id="IPR004298">
    <property type="entry name" value="Nicotian_synth"/>
</dbReference>
<dbReference type="InterPro" id="IPR029063">
    <property type="entry name" value="SAM-dependent_MTases_sf"/>
</dbReference>
<dbReference type="PANTHER" id="PTHR32266">
    <property type="entry name" value="NICOTIANAMINE SYNTHASE 3"/>
    <property type="match status" value="1"/>
</dbReference>
<dbReference type="PANTHER" id="PTHR32266:SF12">
    <property type="entry name" value="NICOTIANAMINE SYNTHASE 3"/>
    <property type="match status" value="1"/>
</dbReference>
<dbReference type="Pfam" id="PF03059">
    <property type="entry name" value="NAS"/>
    <property type="match status" value="1"/>
</dbReference>
<dbReference type="SUPFAM" id="SSF51735">
    <property type="entry name" value="NAD(P)-binding Rossmann-fold domains"/>
    <property type="match status" value="1"/>
</dbReference>
<protein>
    <recommendedName>
        <fullName evidence="2">L-histidine 2-aminobutanoyltransferase</fullName>
        <ecNumber evidence="2">2.5.1.-</ecNumber>
    </recommendedName>
    <alternativeName>
        <fullName>Nicotianamine synthase-like enzyme</fullName>
        <shortName>NAS</shortName>
    </alternativeName>
</protein>
<reference key="1">
    <citation type="journal article" date="2002" name="J. Bacteriol.">
        <title>Genome sequence of Yersinia pestis KIM.</title>
        <authorList>
            <person name="Deng W."/>
            <person name="Burland V."/>
            <person name="Plunkett G. III"/>
            <person name="Boutin A."/>
            <person name="Mayhew G.F."/>
            <person name="Liss P."/>
            <person name="Perna N.T."/>
            <person name="Rose D.J."/>
            <person name="Mau B."/>
            <person name="Zhou S."/>
            <person name="Schwartz D.C."/>
            <person name="Fetherston J.D."/>
            <person name="Lindler L.E."/>
            <person name="Brubaker R.R."/>
            <person name="Plano G.V."/>
            <person name="Straley S.C."/>
            <person name="McDonough K.A."/>
            <person name="Nilles M.L."/>
            <person name="Matson J.S."/>
            <person name="Blattner F.R."/>
            <person name="Perry R.D."/>
        </authorList>
    </citation>
    <scope>NUCLEOTIDE SEQUENCE [LARGE SCALE GENOMIC DNA]</scope>
    <source>
        <strain>KIM10+ / Biovar Mediaevalis</strain>
    </source>
</reference>
<reference key="2">
    <citation type="journal article" date="2004" name="DNA Res.">
        <title>Complete genome sequence of Yersinia pestis strain 91001, an isolate avirulent to humans.</title>
        <authorList>
            <person name="Song Y."/>
            <person name="Tong Z."/>
            <person name="Wang J."/>
            <person name="Wang L."/>
            <person name="Guo Z."/>
            <person name="Han Y."/>
            <person name="Zhang J."/>
            <person name="Pei D."/>
            <person name="Zhou D."/>
            <person name="Qin H."/>
            <person name="Pang X."/>
            <person name="Han Y."/>
            <person name="Zhai J."/>
            <person name="Li M."/>
            <person name="Cui B."/>
            <person name="Qi Z."/>
            <person name="Jin L."/>
            <person name="Dai R."/>
            <person name="Chen F."/>
            <person name="Li S."/>
            <person name="Ye C."/>
            <person name="Du Z."/>
            <person name="Lin W."/>
            <person name="Wang J."/>
            <person name="Yu J."/>
            <person name="Yang H."/>
            <person name="Wang J."/>
            <person name="Huang P."/>
            <person name="Yang R."/>
        </authorList>
    </citation>
    <scope>NUCLEOTIDE SEQUENCE [LARGE SCALE GENOMIC DNA]</scope>
    <source>
        <strain>91001 / Biovar Mediaevalis</strain>
    </source>
</reference>
<reference key="3">
    <citation type="submission" date="2018-06" db="EMBL/GenBank/DDBJ databases">
        <authorList>
            <consortium name="Pathogen Informatics"/>
            <person name="Doyle S."/>
        </authorList>
    </citation>
    <scope>NUCLEOTIDE SEQUENCE [LARGE SCALE GENOMIC DNA]</scope>
    <source>
        <strain>NCTC144</strain>
    </source>
</reference>
<reference key="4">
    <citation type="journal article" date="2018" name="J. Biol. Chem.">
        <title>Staphylopine, pseudopaline, and yersinopine dehydrogenases: A structural and kinetic analysis of a new functional class of opine dehydrogenase.</title>
        <authorList>
            <person name="McFarlane J.S."/>
            <person name="Davis C.L."/>
            <person name="Lamb A.L."/>
        </authorList>
    </citation>
    <scope>FUNCTION</scope>
</reference>
<name>NASLL_YERPE</name>
<evidence type="ECO:0000305" key="1"/>
<evidence type="ECO:0000305" key="2">
    <source>
    </source>
</evidence>
<evidence type="ECO:0000312" key="3">
    <source>
        <dbReference type="EMBL" id="AAM86387.1"/>
    </source>
</evidence>
<evidence type="ECO:0000312" key="4">
    <source>
        <dbReference type="EMBL" id="AAS61493.1"/>
    </source>
</evidence>
<evidence type="ECO:0000312" key="5">
    <source>
        <dbReference type="EMBL" id="SUQ38696.1"/>
    </source>
</evidence>
<accession>Q8D035</accession>
<accession>Q74VP5</accession>
<sequence>MYTLMKADVLAQLAGLQQEISQLHDNAQQNQSHFVLLERRFSRLQSFNDEPQLQDYRLQLEHDDAVVKQIAQLRQVANAALCDYEKHQVCALCSPSSKTDDYLTSFNQSLQQEIKLAGMQMGEKVLLVGSGALPTTALVLVAKLGATVFCYDHDPAAQQLARQLVQSLGLEKQVQFIDNLKELTDRPVDHIIVASLVADKQALLAQLVPYVTRSSKLVMRYGNGLKSIFNCPYCHEVNCSHWRTASKPVTTGLYDLIILEPNHHA</sequence>
<comment type="function">
    <text evidence="2">Catalyzes the nucleophilic attack of one alpha-aminobutanoate moiety from SAM onto L-histidine to produce the intermediate (2S)-2-amino-4-{[(1S)-1-carboxy-2-(1H-imidazol-4-yl)ethyl]amino}butanoate. Functions in the biosynthesis of the metallophore yersinopine, which is involved in metal acquisition and thus enables bacterial growth inside the host, where metal access is limited. Therefore, this enzyme probably contributes to Yersinia virulence.</text>
</comment>
<comment type="catalytic activity">
    <reaction evidence="2">
        <text>L-histidine + S-adenosyl-L-methionine = (2S)-2-amino-4-{[(1S)-1-carboxy-2-(1H-imidazol-4-yl)ethyl]amino}butanoate + S-methyl-5'-thioadenosine + H(+)</text>
        <dbReference type="Rhea" id="RHEA:59780"/>
        <dbReference type="ChEBI" id="CHEBI:15378"/>
        <dbReference type="ChEBI" id="CHEBI:17509"/>
        <dbReference type="ChEBI" id="CHEBI:57595"/>
        <dbReference type="ChEBI" id="CHEBI:59789"/>
        <dbReference type="ChEBI" id="CHEBI:143196"/>
    </reaction>
    <physiologicalReaction direction="left-to-right" evidence="2">
        <dbReference type="Rhea" id="RHEA:59781"/>
    </physiologicalReaction>
</comment>
<comment type="similarity">
    <text evidence="1">Belongs to the methyltransferase superfamily. CntL family.</text>
</comment>
<gene>
    <name evidence="4" type="primary">smtA3</name>
    <name evidence="3" type="ordered locus">y2836</name>
    <name evidence="4" type="ordered locus">YP_1250</name>
    <name evidence="5" type="ORF">NCTC144_04063</name>
</gene>